<comment type="function">
    <text evidence="1">PPIases accelerate the folding of proteins. It catalyzes the cis-trans isomerization of proline imidic peptide bonds in oligopeptides (By similarity).</text>
</comment>
<comment type="catalytic activity">
    <reaction>
        <text>[protein]-peptidylproline (omega=180) = [protein]-peptidylproline (omega=0)</text>
        <dbReference type="Rhea" id="RHEA:16237"/>
        <dbReference type="Rhea" id="RHEA-COMP:10747"/>
        <dbReference type="Rhea" id="RHEA-COMP:10748"/>
        <dbReference type="ChEBI" id="CHEBI:83833"/>
        <dbReference type="ChEBI" id="CHEBI:83834"/>
        <dbReference type="EC" id="5.2.1.8"/>
    </reaction>
</comment>
<comment type="subcellular location">
    <subcellularLocation>
        <location evidence="1">Cytoplasm</location>
    </subcellularLocation>
</comment>
<comment type="similarity">
    <text evidence="3">Belongs to the cyclophilin-type PPIase family. PPIase D subfamily.</text>
</comment>
<keyword id="KW-0963">Cytoplasm</keyword>
<keyword id="KW-0413">Isomerase</keyword>
<keyword id="KW-1185">Reference proteome</keyword>
<keyword id="KW-0677">Repeat</keyword>
<keyword id="KW-0697">Rotamase</keyword>
<keyword id="KW-0802">TPR repeat</keyword>
<sequence>MTNPRVFFEVAIGGKTIGKIYFELFADKVPKTAENFRALCTGEKGNTQAGIPLHFKGSSFHRVIKDFMVQGGDFTAGNGTGGESIYGEKFPDEAFPYPHDQPFLLSMANAGPNTNGSQFFITTTETPHLDNKHVVFGKLLSGKGIVRQIERTETGEQDRPKQPVTIVDCGELPADFQVPVGNVDDGTGDDYEDFLKDNDNVDVNDPASVLGAIEKLKSIGTKLFKEGNAEGALKKYLKATTYLEDYLPDDLSEENIAKVHALRISCYLNVALMALKVNQPKVAIKAATSALDDETVANKEKAKALFRRGSGYAALKNETDALKDLNAALELEPADGAIKNKIEEVKQAAQRRREAEKKKYAGFFGGK</sequence>
<accession>Q6CBP4</accession>
<protein>
    <recommendedName>
        <fullName>Peptidyl-prolyl cis-trans isomerase D</fullName>
        <shortName>PPIase D</shortName>
        <ecNumber>5.2.1.8</ecNumber>
    </recommendedName>
    <alternativeName>
        <fullName>Rotamase D</fullName>
    </alternativeName>
</protein>
<name>PPID_YARLI</name>
<dbReference type="EC" id="5.2.1.8"/>
<dbReference type="EMBL" id="CR382129">
    <property type="protein sequence ID" value="CAG82238.1"/>
    <property type="molecule type" value="Genomic_DNA"/>
</dbReference>
<dbReference type="RefSeq" id="XP_501918.1">
    <property type="nucleotide sequence ID" value="XM_501918.1"/>
</dbReference>
<dbReference type="SMR" id="Q6CBP4"/>
<dbReference type="FunCoup" id="Q6CBP4">
    <property type="interactions" value="1128"/>
</dbReference>
<dbReference type="STRING" id="284591.Q6CBP4"/>
<dbReference type="EnsemblFungi" id="CAG82238">
    <property type="protein sequence ID" value="CAG82238"/>
    <property type="gene ID" value="YALI0_C16775g"/>
</dbReference>
<dbReference type="KEGG" id="yli:2909297"/>
<dbReference type="VEuPathDB" id="FungiDB:YALI0_C16775g"/>
<dbReference type="HOGENOM" id="CLU_012062_37_0_1"/>
<dbReference type="InParanoid" id="Q6CBP4"/>
<dbReference type="OMA" id="EMEQNCN"/>
<dbReference type="OrthoDB" id="118502at4891"/>
<dbReference type="Proteomes" id="UP000001300">
    <property type="component" value="Chromosome C"/>
</dbReference>
<dbReference type="GO" id="GO:0005737">
    <property type="term" value="C:cytoplasm"/>
    <property type="evidence" value="ECO:0000318"/>
    <property type="project" value="GO_Central"/>
</dbReference>
<dbReference type="GO" id="GO:0043231">
    <property type="term" value="C:intracellular membrane-bounded organelle"/>
    <property type="evidence" value="ECO:0000318"/>
    <property type="project" value="GO_Central"/>
</dbReference>
<dbReference type="GO" id="GO:0016018">
    <property type="term" value="F:cyclosporin A binding"/>
    <property type="evidence" value="ECO:0000318"/>
    <property type="project" value="GO_Central"/>
</dbReference>
<dbReference type="GO" id="GO:0003755">
    <property type="term" value="F:peptidyl-prolyl cis-trans isomerase activity"/>
    <property type="evidence" value="ECO:0000318"/>
    <property type="project" value="GO_Central"/>
</dbReference>
<dbReference type="GO" id="GO:0043022">
    <property type="term" value="F:ribosome binding"/>
    <property type="evidence" value="ECO:0007669"/>
    <property type="project" value="EnsemblFungi"/>
</dbReference>
<dbReference type="GO" id="GO:0051082">
    <property type="term" value="F:unfolded protein binding"/>
    <property type="evidence" value="ECO:0007669"/>
    <property type="project" value="EnsemblFungi"/>
</dbReference>
<dbReference type="GO" id="GO:0006457">
    <property type="term" value="P:protein folding"/>
    <property type="evidence" value="ECO:0000318"/>
    <property type="project" value="GO_Central"/>
</dbReference>
<dbReference type="GO" id="GO:0042026">
    <property type="term" value="P:protein refolding"/>
    <property type="evidence" value="ECO:0007669"/>
    <property type="project" value="EnsemblFungi"/>
</dbReference>
<dbReference type="CDD" id="cd01926">
    <property type="entry name" value="cyclophilin_ABH_like"/>
    <property type="match status" value="1"/>
</dbReference>
<dbReference type="FunFam" id="2.40.100.10:FF:000022">
    <property type="entry name" value="Peptidyl-prolyl cis-trans isomerase CYP95"/>
    <property type="match status" value="1"/>
</dbReference>
<dbReference type="FunFam" id="1.25.40.10:FF:000029">
    <property type="entry name" value="peptidyl-prolyl cis-trans isomerase D"/>
    <property type="match status" value="1"/>
</dbReference>
<dbReference type="Gene3D" id="2.40.100.10">
    <property type="entry name" value="Cyclophilin-like"/>
    <property type="match status" value="1"/>
</dbReference>
<dbReference type="Gene3D" id="1.25.40.10">
    <property type="entry name" value="Tetratricopeptide repeat domain"/>
    <property type="match status" value="1"/>
</dbReference>
<dbReference type="InterPro" id="IPR029000">
    <property type="entry name" value="Cyclophilin-like_dom_sf"/>
</dbReference>
<dbReference type="InterPro" id="IPR020892">
    <property type="entry name" value="Cyclophilin-type_PPIase_CS"/>
</dbReference>
<dbReference type="InterPro" id="IPR002130">
    <property type="entry name" value="Cyclophilin-type_PPIase_dom"/>
</dbReference>
<dbReference type="InterPro" id="IPR011990">
    <property type="entry name" value="TPR-like_helical_dom_sf"/>
</dbReference>
<dbReference type="InterPro" id="IPR019734">
    <property type="entry name" value="TPR_rpt"/>
</dbReference>
<dbReference type="PANTHER" id="PTHR11071">
    <property type="entry name" value="PEPTIDYL-PROLYL CIS-TRANS ISOMERASE"/>
    <property type="match status" value="1"/>
</dbReference>
<dbReference type="PANTHER" id="PTHR11071:SF561">
    <property type="entry name" value="PEPTIDYL-PROLYL CIS-TRANS ISOMERASE D-RELATED"/>
    <property type="match status" value="1"/>
</dbReference>
<dbReference type="Pfam" id="PF00160">
    <property type="entry name" value="Pro_isomerase"/>
    <property type="match status" value="1"/>
</dbReference>
<dbReference type="PRINTS" id="PR00153">
    <property type="entry name" value="CSAPPISMRASE"/>
</dbReference>
<dbReference type="SMART" id="SM00028">
    <property type="entry name" value="TPR"/>
    <property type="match status" value="2"/>
</dbReference>
<dbReference type="SUPFAM" id="SSF50891">
    <property type="entry name" value="Cyclophilin-like"/>
    <property type="match status" value="1"/>
</dbReference>
<dbReference type="SUPFAM" id="SSF48452">
    <property type="entry name" value="TPR-like"/>
    <property type="match status" value="1"/>
</dbReference>
<dbReference type="PROSITE" id="PS00170">
    <property type="entry name" value="CSA_PPIASE_1"/>
    <property type="match status" value="1"/>
</dbReference>
<dbReference type="PROSITE" id="PS50072">
    <property type="entry name" value="CSA_PPIASE_2"/>
    <property type="match status" value="1"/>
</dbReference>
<dbReference type="PROSITE" id="PS50005">
    <property type="entry name" value="TPR"/>
    <property type="match status" value="2"/>
</dbReference>
<dbReference type="PROSITE" id="PS50293">
    <property type="entry name" value="TPR_REGION"/>
    <property type="match status" value="1"/>
</dbReference>
<evidence type="ECO:0000250" key="1"/>
<evidence type="ECO:0000255" key="2">
    <source>
        <dbReference type="PROSITE-ProRule" id="PRU00156"/>
    </source>
</evidence>
<evidence type="ECO:0000305" key="3"/>
<gene>
    <name type="primary">CPR6</name>
    <name type="ordered locus">YALI0C16775g</name>
</gene>
<proteinExistence type="inferred from homology"/>
<reference key="1">
    <citation type="journal article" date="2004" name="Nature">
        <title>Genome evolution in yeasts.</title>
        <authorList>
            <person name="Dujon B."/>
            <person name="Sherman D."/>
            <person name="Fischer G."/>
            <person name="Durrens P."/>
            <person name="Casaregola S."/>
            <person name="Lafontaine I."/>
            <person name="de Montigny J."/>
            <person name="Marck C."/>
            <person name="Neuveglise C."/>
            <person name="Talla E."/>
            <person name="Goffard N."/>
            <person name="Frangeul L."/>
            <person name="Aigle M."/>
            <person name="Anthouard V."/>
            <person name="Babour A."/>
            <person name="Barbe V."/>
            <person name="Barnay S."/>
            <person name="Blanchin S."/>
            <person name="Beckerich J.-M."/>
            <person name="Beyne E."/>
            <person name="Bleykasten C."/>
            <person name="Boisrame A."/>
            <person name="Boyer J."/>
            <person name="Cattolico L."/>
            <person name="Confanioleri F."/>
            <person name="de Daruvar A."/>
            <person name="Despons L."/>
            <person name="Fabre E."/>
            <person name="Fairhead C."/>
            <person name="Ferry-Dumazet H."/>
            <person name="Groppi A."/>
            <person name="Hantraye F."/>
            <person name="Hennequin C."/>
            <person name="Jauniaux N."/>
            <person name="Joyet P."/>
            <person name="Kachouri R."/>
            <person name="Kerrest A."/>
            <person name="Koszul R."/>
            <person name="Lemaire M."/>
            <person name="Lesur I."/>
            <person name="Ma L."/>
            <person name="Muller H."/>
            <person name="Nicaud J.-M."/>
            <person name="Nikolski M."/>
            <person name="Oztas S."/>
            <person name="Ozier-Kalogeropoulos O."/>
            <person name="Pellenz S."/>
            <person name="Potier S."/>
            <person name="Richard G.-F."/>
            <person name="Straub M.-L."/>
            <person name="Suleau A."/>
            <person name="Swennen D."/>
            <person name="Tekaia F."/>
            <person name="Wesolowski-Louvel M."/>
            <person name="Westhof E."/>
            <person name="Wirth B."/>
            <person name="Zeniou-Meyer M."/>
            <person name="Zivanovic Y."/>
            <person name="Bolotin-Fukuhara M."/>
            <person name="Thierry A."/>
            <person name="Bouchier C."/>
            <person name="Caudron B."/>
            <person name="Scarpelli C."/>
            <person name="Gaillardin C."/>
            <person name="Weissenbach J."/>
            <person name="Wincker P."/>
            <person name="Souciet J.-L."/>
        </authorList>
    </citation>
    <scope>NUCLEOTIDE SEQUENCE [LARGE SCALE GENOMIC DNA]</scope>
    <source>
        <strain>CLIB 122 / E 150</strain>
    </source>
</reference>
<organism>
    <name type="scientific">Yarrowia lipolytica (strain CLIB 122 / E 150)</name>
    <name type="common">Yeast</name>
    <name type="synonym">Candida lipolytica</name>
    <dbReference type="NCBI Taxonomy" id="284591"/>
    <lineage>
        <taxon>Eukaryota</taxon>
        <taxon>Fungi</taxon>
        <taxon>Dikarya</taxon>
        <taxon>Ascomycota</taxon>
        <taxon>Saccharomycotina</taxon>
        <taxon>Dipodascomycetes</taxon>
        <taxon>Dipodascales</taxon>
        <taxon>Dipodascales incertae sedis</taxon>
        <taxon>Yarrowia</taxon>
    </lineage>
</organism>
<feature type="chain" id="PRO_0000232952" description="Peptidyl-prolyl cis-trans isomerase D">
    <location>
        <begin position="1"/>
        <end position="367"/>
    </location>
</feature>
<feature type="domain" description="PPIase cyclophilin-type" evidence="2">
    <location>
        <begin position="7"/>
        <end position="171"/>
    </location>
</feature>
<feature type="repeat" description="TPR 1">
    <location>
        <begin position="213"/>
        <end position="246"/>
    </location>
</feature>
<feature type="repeat" description="TPR 2">
    <location>
        <begin position="264"/>
        <end position="297"/>
    </location>
</feature>
<feature type="repeat" description="TPR 3">
    <location>
        <begin position="302"/>
        <end position="335"/>
    </location>
</feature>